<protein>
    <recommendedName>
        <fullName evidence="1">Envelope glycoprotein H</fullName>
        <shortName evidence="1">gH</shortName>
    </recommendedName>
</protein>
<organismHost>
    <name type="scientific">Equus caballus</name>
    <name type="common">Horse</name>
    <dbReference type="NCBI Taxonomy" id="9796"/>
</organismHost>
<dbReference type="EMBL" id="X51324">
    <property type="protein sequence ID" value="CAA35707.1"/>
    <property type="molecule type" value="Genomic_DNA"/>
</dbReference>
<dbReference type="EMBL" id="X13209">
    <property type="protein sequence ID" value="CAA31600.1"/>
    <property type="molecule type" value="Genomic_DNA"/>
</dbReference>
<dbReference type="EMBL" id="X13209">
    <property type="protein sequence ID" value="CAA31601.1"/>
    <property type="molecule type" value="Genomic_DNA"/>
</dbReference>
<dbReference type="PIR" id="E36799">
    <property type="entry name" value="VGBED3"/>
</dbReference>
<dbReference type="SMR" id="P68330"/>
<dbReference type="GlyCosmos" id="P68330">
    <property type="glycosylation" value="11 sites, No reported glycans"/>
</dbReference>
<dbReference type="KEGG" id="vg:1487534"/>
<dbReference type="GO" id="GO:0044175">
    <property type="term" value="C:host cell endosome membrane"/>
    <property type="evidence" value="ECO:0007669"/>
    <property type="project" value="UniProtKB-SubCell"/>
</dbReference>
<dbReference type="GO" id="GO:0020002">
    <property type="term" value="C:host cell plasma membrane"/>
    <property type="evidence" value="ECO:0007669"/>
    <property type="project" value="UniProtKB-SubCell"/>
</dbReference>
<dbReference type="GO" id="GO:0016020">
    <property type="term" value="C:membrane"/>
    <property type="evidence" value="ECO:0007669"/>
    <property type="project" value="UniProtKB-KW"/>
</dbReference>
<dbReference type="GO" id="GO:0019031">
    <property type="term" value="C:viral envelope"/>
    <property type="evidence" value="ECO:0007669"/>
    <property type="project" value="UniProtKB-KW"/>
</dbReference>
<dbReference type="GO" id="GO:0055036">
    <property type="term" value="C:virion membrane"/>
    <property type="evidence" value="ECO:0007669"/>
    <property type="project" value="UniProtKB-SubCell"/>
</dbReference>
<dbReference type="GO" id="GO:0019064">
    <property type="term" value="P:fusion of virus membrane with host plasma membrane"/>
    <property type="evidence" value="ECO:0007669"/>
    <property type="project" value="UniProtKB-KW"/>
</dbReference>
<dbReference type="GO" id="GO:0046718">
    <property type="term" value="P:symbiont entry into host cell"/>
    <property type="evidence" value="ECO:0007669"/>
    <property type="project" value="UniProtKB-KW"/>
</dbReference>
<dbReference type="Gene3D" id="1.20.58.1340">
    <property type="match status" value="1"/>
</dbReference>
<dbReference type="Gene3D" id="3.30.500.50">
    <property type="match status" value="1"/>
</dbReference>
<dbReference type="Gene3D" id="2.60.40.3190">
    <property type="entry name" value="Herpesvirus glycoprotein H, C-terminal domain"/>
    <property type="match status" value="1"/>
</dbReference>
<dbReference type="HAMAP" id="MF_04033">
    <property type="entry name" value="HSV_GH"/>
    <property type="match status" value="1"/>
</dbReference>
<dbReference type="InterPro" id="IPR003493">
    <property type="entry name" value="Herpes_gH"/>
</dbReference>
<dbReference type="InterPro" id="IPR035305">
    <property type="entry name" value="Herpes_glycoH_C"/>
</dbReference>
<dbReference type="InterPro" id="IPR038172">
    <property type="entry name" value="Herpes_glycoH_C_sf"/>
</dbReference>
<dbReference type="Pfam" id="PF17488">
    <property type="entry name" value="Herpes_glycoH_C"/>
    <property type="match status" value="1"/>
</dbReference>
<dbReference type="Pfam" id="PF02489">
    <property type="entry name" value="Herpes_glycop_H"/>
    <property type="match status" value="1"/>
</dbReference>
<reference key="1">
    <citation type="journal article" date="1991" name="DNA Seq.">
        <title>Sequence characteristics of a gene in equine herpesvirus 1 homologous to glycoprotein H of herpes simplex virus.</title>
        <authorList>
            <person name="Robertson G.R."/>
            <person name="Scott N.A."/>
            <person name="Miller J.M."/>
            <person name="Sabine M."/>
            <person name="Zheng M."/>
            <person name="Bell C.W."/>
            <person name="Whalley J.M."/>
        </authorList>
    </citation>
    <scope>NUCLEOTIDE SEQUENCE [GENOMIC DNA]</scope>
</reference>
<reference key="2">
    <citation type="journal article" date="1988" name="Nucleic Acids Res.">
        <title>Evolution of the herpes thymidine kinase: identification and comparison of the equine herpesvirus 1 thymidine kinase gene reveals similarity to a cell-encoded thymidylate kinase.</title>
        <authorList>
            <person name="Robertson G.R."/>
            <person name="Whalley J.M."/>
        </authorList>
    </citation>
    <scope>NUCLEOTIDE SEQUENCE [GENOMIC DNA] OF 1-256</scope>
</reference>
<sequence length="848" mass="92842">MLQPYRKMLIFAVVTVAFAMAVWSTPVPATPSGVGNATWANNSFNITRYDKITMGQVYSNTSNSPIFFVVISERNFRIVNTPLGASVFWIPKGAMNPPQHQPCVANGPEPGDPRGPCVNSTVSLLFNENVEPFLMSKNLLEFEVLPDTYITGWTFERSKTATTKSNPVGVVLSPPRGSPSANTTIRDDGGPKKPLSIIDEYTTLVADLQNFTMTLTYISPFAAVWPIEAFQTGITVMGCDTTQVVAYLGHGFMGLQISSVNNPPLEMIVVPNDVSARILNRRPSRLRLEPPGPHAGPIYKVYVLSDGNFYLGHGMSRISREVAAYPEESLDYRYHLSLANLDTLAMLAELSSGKSTDVSYYMYRIVARLAVATFSLAEVIRLSDYMLLQEAIDVDMNLRLIVPLVMKYAAGGAADSSYTSSDVAMDQFDVAQSQIEKIVSDINVEAELRKPMYEHRSLLRSVYAYSRKPLPNAVALADRLILAMYKEAIKDRITWNSTMREVLFFAVGAAAGSHVILTDEPEPGAPAHKDASLFLSLNRNILLLCTAMCTASHAVSAGLKLEEVMAGLVAGGVQFSLLEVFSPCMASTRFDLAEEEHVLDLLSVIPPRLYTDLNTGFEDDGTTIHSYGRSANGILNSRIAYNFDAVSVFTPELASCSTKLPKVLVVLPIFTNRSYVITRTAPSIGLTYSLDGVNIAKPIVISYITYGNCEVSRATIKSGYLDNPGHTQTCVYCGSVFMRYMVSGAIMDLIYIDDKEVELQLVAGENSTIPAFNPKLYTPSMNALLMFPNGTVTLMSAFASYSSFKVPSTYLWASIGGLLLAILILYIIIKMLCGGVTNDGYKLLLSYE</sequence>
<proteinExistence type="inferred from homology"/>
<evidence type="ECO:0000255" key="1">
    <source>
        <dbReference type="HAMAP-Rule" id="MF_04033"/>
    </source>
</evidence>
<evidence type="ECO:0000256" key="2">
    <source>
        <dbReference type="SAM" id="MobiDB-lite"/>
    </source>
</evidence>
<feature type="signal peptide" evidence="1">
    <location>
        <begin position="1"/>
        <end position="24"/>
    </location>
</feature>
<feature type="chain" id="PRO_0000038238" description="Envelope glycoprotein H" evidence="1">
    <location>
        <begin position="25"/>
        <end position="848"/>
    </location>
</feature>
<feature type="topological domain" description="Virion surface" evidence="1">
    <location>
        <begin position="25"/>
        <end position="808"/>
    </location>
</feature>
<feature type="transmembrane region" description="Helical" evidence="1">
    <location>
        <begin position="809"/>
        <end position="829"/>
    </location>
</feature>
<feature type="topological domain" description="Intravirion" evidence="1">
    <location>
        <begin position="830"/>
        <end position="848"/>
    </location>
</feature>
<feature type="region of interest" description="Disordered" evidence="2">
    <location>
        <begin position="166"/>
        <end position="191"/>
    </location>
</feature>
<feature type="region of interest" description="Interaction with gL" evidence="1">
    <location>
        <begin position="240"/>
        <end position="303"/>
    </location>
</feature>
<feature type="glycosylation site" description="N-linked (GlcNAc...) asparagine; by host" evidence="1">
    <location>
        <position position="36"/>
    </location>
</feature>
<feature type="glycosylation site" description="N-linked (GlcNAc...) asparagine; by host" evidence="1">
    <location>
        <position position="41"/>
    </location>
</feature>
<feature type="glycosylation site" description="N-linked (GlcNAc...) asparagine; by host" evidence="1">
    <location>
        <position position="45"/>
    </location>
</feature>
<feature type="glycosylation site" description="N-linked (GlcNAc...) asparagine; by host" evidence="1">
    <location>
        <position position="60"/>
    </location>
</feature>
<feature type="glycosylation site" description="N-linked (GlcNAc...) asparagine; by host" evidence="1">
    <location>
        <position position="119"/>
    </location>
</feature>
<feature type="glycosylation site" description="N-linked (GlcNAc...) asparagine; by host" evidence="1">
    <location>
        <position position="182"/>
    </location>
</feature>
<feature type="glycosylation site" description="N-linked (GlcNAc...) asparagine; by host" evidence="1">
    <location>
        <position position="210"/>
    </location>
</feature>
<feature type="glycosylation site" description="N-linked (GlcNAc...) asparagine; by host" evidence="1">
    <location>
        <position position="496"/>
    </location>
</feature>
<feature type="glycosylation site" description="N-linked (GlcNAc...) asparagine; by host" evidence="1">
    <location>
        <position position="672"/>
    </location>
</feature>
<feature type="glycosylation site" description="N-linked (GlcNAc...) asparagine; by host" evidence="1">
    <location>
        <position position="766"/>
    </location>
</feature>
<feature type="glycosylation site" description="N-linked (GlcNAc...) asparagine; by host" evidence="1">
    <location>
        <position position="789"/>
    </location>
</feature>
<organism>
    <name type="scientific">Equine herpesvirus 1 (strain HVS25A)</name>
    <name type="common">EHV-1</name>
    <name type="synonym">Equine abortion virus</name>
    <dbReference type="NCBI Taxonomy" id="10327"/>
    <lineage>
        <taxon>Viruses</taxon>
        <taxon>Duplodnaviria</taxon>
        <taxon>Heunggongvirae</taxon>
        <taxon>Peploviricota</taxon>
        <taxon>Herviviricetes</taxon>
        <taxon>Herpesvirales</taxon>
        <taxon>Orthoherpesviridae</taxon>
        <taxon>Alphaherpesvirinae</taxon>
        <taxon>Varicellovirus</taxon>
        <taxon>Varicellovirus equidalpha1</taxon>
        <taxon>Equid alphaherpesvirus 1</taxon>
    </lineage>
</organism>
<keyword id="KW-1169">Fusion of virus membrane with host cell membrane</keyword>
<keyword id="KW-1168">Fusion of virus membrane with host membrane</keyword>
<keyword id="KW-0325">Glycoprotein</keyword>
<keyword id="KW-1032">Host cell membrane</keyword>
<keyword id="KW-1039">Host endosome</keyword>
<keyword id="KW-1043">Host membrane</keyword>
<keyword id="KW-0472">Membrane</keyword>
<keyword id="KW-0730">Sialic acid</keyword>
<keyword id="KW-0732">Signal</keyword>
<keyword id="KW-0812">Transmembrane</keyword>
<keyword id="KW-1133">Transmembrane helix</keyword>
<keyword id="KW-0261">Viral envelope protein</keyword>
<keyword id="KW-1162">Viral penetration into host cytoplasm</keyword>
<keyword id="KW-0946">Virion</keyword>
<keyword id="KW-1160">Virus entry into host cell</keyword>
<gene>
    <name evidence="1" type="primary">gH</name>
</gene>
<comment type="function">
    <text evidence="1">The heterodimer glycoprotein H-glycoprotein L is required for the fusion of viral and plasma membranes leading to virus entry into the host cell. Following initial binding to host receptor, membrane fusion is mediated by the fusion machinery composed of gB and the heterodimer gH/gL. May also be involved in the fusion between the virion envelope and the outer nuclear membrane during virion morphogenesis.</text>
</comment>
<comment type="subunit">
    <text evidence="1">Interacts with glycoprotein L (gL); this interaction is necessary for the correct processing and cell surface expression of gH. The heterodimer gH/gL seems to interact with gB trimers during fusion.</text>
</comment>
<comment type="subcellular location">
    <subcellularLocation>
        <location evidence="1">Virion membrane</location>
        <topology evidence="1">Single-pass type I membrane protein</topology>
    </subcellularLocation>
    <subcellularLocation>
        <location evidence="1">Host cell membrane</location>
        <topology evidence="1">Single-pass type I membrane protein</topology>
    </subcellularLocation>
    <subcellularLocation>
        <location evidence="1">Host endosome membrane</location>
        <topology evidence="1">Single-pass type I membrane protein</topology>
    </subcellularLocation>
    <text evidence="1">During virion morphogenesis, this protein probably accumulates in the endosomes and trans-Golgi where secondary envelopment occurs. It is probably transported to the cell surface from where it is endocytosed and directed to the trans-Golgi network (TGN).</text>
</comment>
<comment type="PTM">
    <text evidence="1">N-glycosylated, O-glycosylated, and sialylated.</text>
</comment>
<comment type="similarity">
    <text evidence="1">Belongs to the herpesviridae glycoprotein H family.</text>
</comment>
<accession>P68330</accession>
<accession>P09101</accession>
<accession>Q66681</accession>
<name>GH_EHV1</name>